<geneLocation type="chloroplast"/>
<feature type="chain" id="PRO_0000277567" description="ATP synthase subunit c, chloroplastic">
    <location>
        <begin position="1"/>
        <end position="81"/>
    </location>
</feature>
<feature type="transmembrane region" description="Helical" evidence="1">
    <location>
        <begin position="7"/>
        <end position="27"/>
    </location>
</feature>
<feature type="transmembrane region" description="Helical" evidence="1">
    <location>
        <begin position="57"/>
        <end position="77"/>
    </location>
</feature>
<feature type="site" description="Reversibly protonated during proton transport" evidence="1">
    <location>
        <position position="61"/>
    </location>
</feature>
<organism>
    <name type="scientific">Solanum tuberosum</name>
    <name type="common">Potato</name>
    <dbReference type="NCBI Taxonomy" id="4113"/>
    <lineage>
        <taxon>Eukaryota</taxon>
        <taxon>Viridiplantae</taxon>
        <taxon>Streptophyta</taxon>
        <taxon>Embryophyta</taxon>
        <taxon>Tracheophyta</taxon>
        <taxon>Spermatophyta</taxon>
        <taxon>Magnoliopsida</taxon>
        <taxon>eudicotyledons</taxon>
        <taxon>Gunneridae</taxon>
        <taxon>Pentapetalae</taxon>
        <taxon>asterids</taxon>
        <taxon>lamiids</taxon>
        <taxon>Solanales</taxon>
        <taxon>Solanaceae</taxon>
        <taxon>Solanoideae</taxon>
        <taxon>Solaneae</taxon>
        <taxon>Solanum</taxon>
    </lineage>
</organism>
<protein>
    <recommendedName>
        <fullName evidence="1">ATP synthase subunit c, chloroplastic</fullName>
    </recommendedName>
    <alternativeName>
        <fullName evidence="1">ATP synthase F(0) sector subunit c</fullName>
    </alternativeName>
    <alternativeName>
        <fullName evidence="1">ATPase subunit III</fullName>
    </alternativeName>
    <alternativeName>
        <fullName evidence="1">F-type ATPase subunit c</fullName>
        <shortName evidence="1">F-ATPase subunit c</shortName>
    </alternativeName>
    <alternativeName>
        <fullName evidence="1">Lipid-binding protein</fullName>
    </alternativeName>
</protein>
<sequence>MNPLISAASVIAAGLAVGLASIGPGIGQGTAAGQAVEGIARQPEAEGKIRGTLLLSLAFMEALTIYGLVVALALLFANPFV</sequence>
<reference key="1">
    <citation type="journal article" date="2006" name="Plant Cell Rep.">
        <title>The complete chloroplast genome sequences of Solanum tuberosum and comparative analysis with Solanaceae species identified the presence of a 241-bp deletion in cultivated potato chloroplast DNA sequence.</title>
        <authorList>
            <person name="Chung H.-J."/>
            <person name="Jung J.D."/>
            <person name="Park H.-W."/>
            <person name="Kim J.-H."/>
            <person name="Cha H.W."/>
            <person name="Min S.R."/>
            <person name="Jeong W.-J."/>
            <person name="Liu J.R."/>
        </authorList>
    </citation>
    <scope>NUCLEOTIDE SEQUENCE [LARGE SCALE GENOMIC DNA]</scope>
    <source>
        <strain>cv. Desiree</strain>
    </source>
</reference>
<reference key="2">
    <citation type="submission" date="2006-02" db="EMBL/GenBank/DDBJ databases">
        <title>Complete chloroplast genome sequences of Solanum tuberosum cultivar Desiree and comparative analyses with other Solanaceae genomes.</title>
        <authorList>
            <person name="Gargano D."/>
            <person name="Scotti N."/>
            <person name="Vezzi A."/>
            <person name="Bilardi A."/>
            <person name="Valle G."/>
            <person name="Grillo S."/>
            <person name="Cardi T."/>
        </authorList>
    </citation>
    <scope>NUCLEOTIDE SEQUENCE [LARGE SCALE GENOMIC DNA]</scope>
    <source>
        <strain>cv. Desiree</strain>
    </source>
</reference>
<gene>
    <name evidence="1" type="primary">atpH</name>
</gene>
<evidence type="ECO:0000255" key="1">
    <source>
        <dbReference type="HAMAP-Rule" id="MF_01396"/>
    </source>
</evidence>
<name>ATPH_SOLTU</name>
<proteinExistence type="inferred from homology"/>
<accession>Q2VEI9</accession>
<keyword id="KW-0066">ATP synthesis</keyword>
<keyword id="KW-0138">CF(0)</keyword>
<keyword id="KW-0150">Chloroplast</keyword>
<keyword id="KW-0375">Hydrogen ion transport</keyword>
<keyword id="KW-0406">Ion transport</keyword>
<keyword id="KW-0446">Lipid-binding</keyword>
<keyword id="KW-0472">Membrane</keyword>
<keyword id="KW-0934">Plastid</keyword>
<keyword id="KW-1185">Reference proteome</keyword>
<keyword id="KW-0793">Thylakoid</keyword>
<keyword id="KW-0812">Transmembrane</keyword>
<keyword id="KW-1133">Transmembrane helix</keyword>
<keyword id="KW-0813">Transport</keyword>
<comment type="function">
    <text evidence="1">F(1)F(0) ATP synthase produces ATP from ADP in the presence of a proton or sodium gradient. F-type ATPases consist of two structural domains, F(1) containing the extramembraneous catalytic core and F(0) containing the membrane proton channel, linked together by a central stalk and a peripheral stalk. During catalysis, ATP synthesis in the catalytic domain of F(1) is coupled via a rotary mechanism of the central stalk subunits to proton translocation.</text>
</comment>
<comment type="function">
    <text evidence="1">Key component of the F(0) channel; it plays a direct role in translocation across the membrane. A homomeric c-ring of between 10-14 subunits forms the central stalk rotor element with the F(1) delta and epsilon subunits.</text>
</comment>
<comment type="subunit">
    <text evidence="1">F-type ATPases have 2 components, F(1) - the catalytic core - and F(0) - the membrane proton channel. F(1) has five subunits: alpha(3), beta(3), gamma(1), delta(1), epsilon(1). F(0) has four main subunits: a(1), b(1), b'(1) and c(10-14). The alpha and beta chains form an alternating ring which encloses part of the gamma chain. F(1) is attached to F(0) by a central stalk formed by the gamma and epsilon chains, while a peripheral stalk is formed by the delta, b and b' chains.</text>
</comment>
<comment type="subcellular location">
    <subcellularLocation>
        <location evidence="1">Plastid</location>
        <location evidence="1">Chloroplast thylakoid membrane</location>
        <topology evidence="1">Multi-pass membrane protein</topology>
    </subcellularLocation>
</comment>
<comment type="miscellaneous">
    <text>In plastids the F-type ATPase is also known as CF(1)CF(0).</text>
</comment>
<comment type="similarity">
    <text evidence="1">Belongs to the ATPase C chain family.</text>
</comment>
<dbReference type="EMBL" id="DQ231562">
    <property type="protein sequence ID" value="ABB90030.1"/>
    <property type="molecule type" value="Genomic_DNA"/>
</dbReference>
<dbReference type="EMBL" id="DQ386163">
    <property type="protein sequence ID" value="ABD47044.1"/>
    <property type="molecule type" value="Genomic_DNA"/>
</dbReference>
<dbReference type="RefSeq" id="YP_635626.1">
    <property type="nucleotide sequence ID" value="NC_008096.2"/>
</dbReference>
<dbReference type="SMR" id="Q2VEI9"/>
<dbReference type="FunCoup" id="Q2VEI9">
    <property type="interactions" value="106"/>
</dbReference>
<dbReference type="STRING" id="4113.Q2VEI9"/>
<dbReference type="GeneID" id="4099856"/>
<dbReference type="KEGG" id="sot:4099856"/>
<dbReference type="InParanoid" id="Q2VEI9"/>
<dbReference type="OrthoDB" id="438052at2759"/>
<dbReference type="Proteomes" id="UP000011115">
    <property type="component" value="Unassembled WGS sequence"/>
</dbReference>
<dbReference type="GO" id="GO:0009535">
    <property type="term" value="C:chloroplast thylakoid membrane"/>
    <property type="evidence" value="ECO:0007669"/>
    <property type="project" value="UniProtKB-SubCell"/>
</dbReference>
<dbReference type="GO" id="GO:0045259">
    <property type="term" value="C:proton-transporting ATP synthase complex"/>
    <property type="evidence" value="ECO:0007669"/>
    <property type="project" value="UniProtKB-KW"/>
</dbReference>
<dbReference type="GO" id="GO:0033177">
    <property type="term" value="C:proton-transporting two-sector ATPase complex, proton-transporting domain"/>
    <property type="evidence" value="ECO:0007669"/>
    <property type="project" value="InterPro"/>
</dbReference>
<dbReference type="GO" id="GO:0008289">
    <property type="term" value="F:lipid binding"/>
    <property type="evidence" value="ECO:0007669"/>
    <property type="project" value="UniProtKB-KW"/>
</dbReference>
<dbReference type="GO" id="GO:0046933">
    <property type="term" value="F:proton-transporting ATP synthase activity, rotational mechanism"/>
    <property type="evidence" value="ECO:0007669"/>
    <property type="project" value="UniProtKB-UniRule"/>
</dbReference>
<dbReference type="GO" id="GO:0015986">
    <property type="term" value="P:proton motive force-driven ATP synthesis"/>
    <property type="evidence" value="ECO:0000318"/>
    <property type="project" value="GO_Central"/>
</dbReference>
<dbReference type="CDD" id="cd18183">
    <property type="entry name" value="ATP-synt_Fo_c_ATPH"/>
    <property type="match status" value="1"/>
</dbReference>
<dbReference type="FunFam" id="1.20.20.10:FF:000001">
    <property type="entry name" value="ATP synthase subunit c, chloroplastic"/>
    <property type="match status" value="1"/>
</dbReference>
<dbReference type="Gene3D" id="1.20.20.10">
    <property type="entry name" value="F1F0 ATP synthase subunit C"/>
    <property type="match status" value="1"/>
</dbReference>
<dbReference type="HAMAP" id="MF_01396">
    <property type="entry name" value="ATP_synth_c_bact"/>
    <property type="match status" value="1"/>
</dbReference>
<dbReference type="InterPro" id="IPR005953">
    <property type="entry name" value="ATP_synth_csu_bac/chlpt"/>
</dbReference>
<dbReference type="InterPro" id="IPR000454">
    <property type="entry name" value="ATP_synth_F0_csu"/>
</dbReference>
<dbReference type="InterPro" id="IPR020537">
    <property type="entry name" value="ATP_synth_F0_csu_DDCD_BS"/>
</dbReference>
<dbReference type="InterPro" id="IPR038662">
    <property type="entry name" value="ATP_synth_F0_csu_sf"/>
</dbReference>
<dbReference type="InterPro" id="IPR002379">
    <property type="entry name" value="ATPase_proteolipid_c-like_dom"/>
</dbReference>
<dbReference type="InterPro" id="IPR035921">
    <property type="entry name" value="F/V-ATP_Csub_sf"/>
</dbReference>
<dbReference type="NCBIfam" id="TIGR01260">
    <property type="entry name" value="ATP_synt_c"/>
    <property type="match status" value="1"/>
</dbReference>
<dbReference type="NCBIfam" id="NF005608">
    <property type="entry name" value="PRK07354.1"/>
    <property type="match status" value="1"/>
</dbReference>
<dbReference type="PANTHER" id="PTHR10031">
    <property type="entry name" value="ATP SYNTHASE LIPID-BINDING PROTEIN, MITOCHONDRIAL"/>
    <property type="match status" value="1"/>
</dbReference>
<dbReference type="PANTHER" id="PTHR10031:SF0">
    <property type="entry name" value="ATPASE PROTEIN 9"/>
    <property type="match status" value="1"/>
</dbReference>
<dbReference type="Pfam" id="PF00137">
    <property type="entry name" value="ATP-synt_C"/>
    <property type="match status" value="1"/>
</dbReference>
<dbReference type="PRINTS" id="PR00124">
    <property type="entry name" value="ATPASEC"/>
</dbReference>
<dbReference type="SUPFAM" id="SSF81333">
    <property type="entry name" value="F1F0 ATP synthase subunit C"/>
    <property type="match status" value="1"/>
</dbReference>
<dbReference type="PROSITE" id="PS00605">
    <property type="entry name" value="ATPASE_C"/>
    <property type="match status" value="1"/>
</dbReference>